<dbReference type="EC" id="2.5.1.72" evidence="1"/>
<dbReference type="EMBL" id="AE017220">
    <property type="protein sequence ID" value="AAX64661.1"/>
    <property type="molecule type" value="Genomic_DNA"/>
</dbReference>
<dbReference type="RefSeq" id="WP_011264227.1">
    <property type="nucleotide sequence ID" value="NC_006905.1"/>
</dbReference>
<dbReference type="SMR" id="Q57RK0"/>
<dbReference type="KEGG" id="sec:SCH_0755"/>
<dbReference type="HOGENOM" id="CLU_047382_1_0_6"/>
<dbReference type="UniPathway" id="UPA00253">
    <property type="reaction ID" value="UER00327"/>
</dbReference>
<dbReference type="Proteomes" id="UP000000538">
    <property type="component" value="Chromosome"/>
</dbReference>
<dbReference type="GO" id="GO:0005829">
    <property type="term" value="C:cytosol"/>
    <property type="evidence" value="ECO:0007669"/>
    <property type="project" value="TreeGrafter"/>
</dbReference>
<dbReference type="GO" id="GO:0051539">
    <property type="term" value="F:4 iron, 4 sulfur cluster binding"/>
    <property type="evidence" value="ECO:0007669"/>
    <property type="project" value="UniProtKB-KW"/>
</dbReference>
<dbReference type="GO" id="GO:0046872">
    <property type="term" value="F:metal ion binding"/>
    <property type="evidence" value="ECO:0007669"/>
    <property type="project" value="UniProtKB-KW"/>
</dbReference>
<dbReference type="GO" id="GO:0008987">
    <property type="term" value="F:quinolinate synthetase A activity"/>
    <property type="evidence" value="ECO:0007669"/>
    <property type="project" value="UniProtKB-UniRule"/>
</dbReference>
<dbReference type="GO" id="GO:0034628">
    <property type="term" value="P:'de novo' NAD biosynthetic process from L-aspartate"/>
    <property type="evidence" value="ECO:0007669"/>
    <property type="project" value="TreeGrafter"/>
</dbReference>
<dbReference type="FunFam" id="3.40.50.10800:FF:000003">
    <property type="entry name" value="Quinolinate synthase A"/>
    <property type="match status" value="1"/>
</dbReference>
<dbReference type="Gene3D" id="3.40.50.10800">
    <property type="entry name" value="NadA-like"/>
    <property type="match status" value="3"/>
</dbReference>
<dbReference type="HAMAP" id="MF_00567">
    <property type="entry name" value="NadA_type1"/>
    <property type="match status" value="1"/>
</dbReference>
<dbReference type="InterPro" id="IPR003473">
    <property type="entry name" value="NadA"/>
</dbReference>
<dbReference type="InterPro" id="IPR036094">
    <property type="entry name" value="NadA_sf"/>
</dbReference>
<dbReference type="InterPro" id="IPR023513">
    <property type="entry name" value="Quinolinate_synth_A_type1"/>
</dbReference>
<dbReference type="NCBIfam" id="TIGR00550">
    <property type="entry name" value="nadA"/>
    <property type="match status" value="1"/>
</dbReference>
<dbReference type="NCBIfam" id="NF006877">
    <property type="entry name" value="PRK09375.1-1"/>
    <property type="match status" value="1"/>
</dbReference>
<dbReference type="NCBIfam" id="NF006878">
    <property type="entry name" value="PRK09375.1-2"/>
    <property type="match status" value="1"/>
</dbReference>
<dbReference type="PANTHER" id="PTHR30573:SF0">
    <property type="entry name" value="QUINOLINATE SYNTHASE, CHLOROPLASTIC"/>
    <property type="match status" value="1"/>
</dbReference>
<dbReference type="PANTHER" id="PTHR30573">
    <property type="entry name" value="QUINOLINATE SYNTHETASE A"/>
    <property type="match status" value="1"/>
</dbReference>
<dbReference type="Pfam" id="PF02445">
    <property type="entry name" value="NadA"/>
    <property type="match status" value="1"/>
</dbReference>
<dbReference type="SUPFAM" id="SSF142754">
    <property type="entry name" value="NadA-like"/>
    <property type="match status" value="1"/>
</dbReference>
<sequence length="347" mass="37887">MSVMFDPQAAIYPFPPKPTPLSDDEKQFYREKIKRLLKERNAVMVAHYYTDPEIQQLAEETGGCISDSLEMARFGAKHAASTLLVAGVRFMGETAKILSPEKTILMPTLAAECSLDLGCPIDEFSAFCDAHPDRTVVVYANTSAAVKARADWVVTSSIAVELIEHLDSLGEKIIWAPDRHLGNYVQKQTGADVLCWQGACIVHDEFKTQALTRLKKIYPDAALLVHPESPQSIVEMADAVGSTSQLIKAAKTLPHRQLIVATDRGIFYKMQQAVPEKELLEAPTAGEGATCRSCAHCPWMAMNGLKAIAEGLEQGGAAHEIQVDAALREGALLPLNRMLDFAATLRA</sequence>
<proteinExistence type="inferred from homology"/>
<reference key="1">
    <citation type="journal article" date="2005" name="Nucleic Acids Res.">
        <title>The genome sequence of Salmonella enterica serovar Choleraesuis, a highly invasive and resistant zoonotic pathogen.</title>
        <authorList>
            <person name="Chiu C.-H."/>
            <person name="Tang P."/>
            <person name="Chu C."/>
            <person name="Hu S."/>
            <person name="Bao Q."/>
            <person name="Yu J."/>
            <person name="Chou Y.-Y."/>
            <person name="Wang H.-S."/>
            <person name="Lee Y.-S."/>
        </authorList>
    </citation>
    <scope>NUCLEOTIDE SEQUENCE [LARGE SCALE GENOMIC DNA]</scope>
    <source>
        <strain>SC-B67</strain>
    </source>
</reference>
<evidence type="ECO:0000255" key="1">
    <source>
        <dbReference type="HAMAP-Rule" id="MF_00567"/>
    </source>
</evidence>
<name>NADA_SALCH</name>
<feature type="chain" id="PRO_1000024968" description="Quinolinate synthase">
    <location>
        <begin position="1"/>
        <end position="347"/>
    </location>
</feature>
<feature type="binding site" evidence="1">
    <location>
        <position position="47"/>
    </location>
    <ligand>
        <name>iminosuccinate</name>
        <dbReference type="ChEBI" id="CHEBI:77875"/>
    </ligand>
</feature>
<feature type="binding site" evidence="1">
    <location>
        <position position="68"/>
    </location>
    <ligand>
        <name>iminosuccinate</name>
        <dbReference type="ChEBI" id="CHEBI:77875"/>
    </ligand>
</feature>
<feature type="binding site" evidence="1">
    <location>
        <position position="113"/>
    </location>
    <ligand>
        <name>[4Fe-4S] cluster</name>
        <dbReference type="ChEBI" id="CHEBI:49883"/>
    </ligand>
</feature>
<feature type="binding site" evidence="1">
    <location>
        <begin position="139"/>
        <end position="141"/>
    </location>
    <ligand>
        <name>iminosuccinate</name>
        <dbReference type="ChEBI" id="CHEBI:77875"/>
    </ligand>
</feature>
<feature type="binding site" evidence="1">
    <location>
        <position position="156"/>
    </location>
    <ligand>
        <name>iminosuccinate</name>
        <dbReference type="ChEBI" id="CHEBI:77875"/>
    </ligand>
</feature>
<feature type="binding site" evidence="1">
    <location>
        <position position="200"/>
    </location>
    <ligand>
        <name>[4Fe-4S] cluster</name>
        <dbReference type="ChEBI" id="CHEBI:49883"/>
    </ligand>
</feature>
<feature type="binding site" evidence="1">
    <location>
        <begin position="226"/>
        <end position="228"/>
    </location>
    <ligand>
        <name>iminosuccinate</name>
        <dbReference type="ChEBI" id="CHEBI:77875"/>
    </ligand>
</feature>
<feature type="binding site" evidence="1">
    <location>
        <position position="243"/>
    </location>
    <ligand>
        <name>iminosuccinate</name>
        <dbReference type="ChEBI" id="CHEBI:77875"/>
    </ligand>
</feature>
<feature type="binding site" evidence="1">
    <location>
        <position position="297"/>
    </location>
    <ligand>
        <name>[4Fe-4S] cluster</name>
        <dbReference type="ChEBI" id="CHEBI:49883"/>
    </ligand>
</feature>
<accession>Q57RK0</accession>
<comment type="function">
    <text evidence="1">Catalyzes the condensation of iminoaspartate with dihydroxyacetone phosphate to form quinolinate.</text>
</comment>
<comment type="catalytic activity">
    <reaction evidence="1">
        <text>iminosuccinate + dihydroxyacetone phosphate = quinolinate + phosphate + 2 H2O + H(+)</text>
        <dbReference type="Rhea" id="RHEA:25888"/>
        <dbReference type="ChEBI" id="CHEBI:15377"/>
        <dbReference type="ChEBI" id="CHEBI:15378"/>
        <dbReference type="ChEBI" id="CHEBI:29959"/>
        <dbReference type="ChEBI" id="CHEBI:43474"/>
        <dbReference type="ChEBI" id="CHEBI:57642"/>
        <dbReference type="ChEBI" id="CHEBI:77875"/>
        <dbReference type="EC" id="2.5.1.72"/>
    </reaction>
    <physiologicalReaction direction="left-to-right" evidence="1">
        <dbReference type="Rhea" id="RHEA:25889"/>
    </physiologicalReaction>
</comment>
<comment type="cofactor">
    <cofactor evidence="1">
        <name>[4Fe-4S] cluster</name>
        <dbReference type="ChEBI" id="CHEBI:49883"/>
    </cofactor>
    <text evidence="1">Binds 1 [4Fe-4S] cluster per subunit.</text>
</comment>
<comment type="pathway">
    <text evidence="1">Cofactor biosynthesis; NAD(+) biosynthesis; quinolinate from iminoaspartate: step 1/1.</text>
</comment>
<comment type="subcellular location">
    <subcellularLocation>
        <location evidence="1">Cytoplasm</location>
    </subcellularLocation>
</comment>
<comment type="similarity">
    <text evidence="1">Belongs to the quinolinate synthase family. Type 1 subfamily.</text>
</comment>
<keyword id="KW-0004">4Fe-4S</keyword>
<keyword id="KW-0963">Cytoplasm</keyword>
<keyword id="KW-0408">Iron</keyword>
<keyword id="KW-0411">Iron-sulfur</keyword>
<keyword id="KW-0479">Metal-binding</keyword>
<keyword id="KW-0662">Pyridine nucleotide biosynthesis</keyword>
<keyword id="KW-0808">Transferase</keyword>
<organism>
    <name type="scientific">Salmonella choleraesuis (strain SC-B67)</name>
    <dbReference type="NCBI Taxonomy" id="321314"/>
    <lineage>
        <taxon>Bacteria</taxon>
        <taxon>Pseudomonadati</taxon>
        <taxon>Pseudomonadota</taxon>
        <taxon>Gammaproteobacteria</taxon>
        <taxon>Enterobacterales</taxon>
        <taxon>Enterobacteriaceae</taxon>
        <taxon>Salmonella</taxon>
    </lineage>
</organism>
<gene>
    <name evidence="1" type="primary">nadA</name>
    <name type="ordered locus">SCH_0755</name>
</gene>
<protein>
    <recommendedName>
        <fullName evidence="1">Quinolinate synthase</fullName>
        <ecNumber evidence="1">2.5.1.72</ecNumber>
    </recommendedName>
</protein>